<organism>
    <name type="scientific">Staphylococcus aureus (strain JH9)</name>
    <dbReference type="NCBI Taxonomy" id="359786"/>
    <lineage>
        <taxon>Bacteria</taxon>
        <taxon>Bacillati</taxon>
        <taxon>Bacillota</taxon>
        <taxon>Bacilli</taxon>
        <taxon>Bacillales</taxon>
        <taxon>Staphylococcaceae</taxon>
        <taxon>Staphylococcus</taxon>
    </lineage>
</organism>
<keyword id="KW-0046">Antibiotic resistance</keyword>
<keyword id="KW-1003">Cell membrane</keyword>
<keyword id="KW-0133">Cell shape</keyword>
<keyword id="KW-0961">Cell wall biogenesis/degradation</keyword>
<keyword id="KW-0378">Hydrolase</keyword>
<keyword id="KW-0472">Membrane</keyword>
<keyword id="KW-0573">Peptidoglycan synthesis</keyword>
<keyword id="KW-0812">Transmembrane</keyword>
<keyword id="KW-1133">Transmembrane helix</keyword>
<dbReference type="EC" id="3.6.1.27" evidence="1"/>
<dbReference type="EMBL" id="CP000703">
    <property type="protein sequence ID" value="ABQ48510.1"/>
    <property type="molecule type" value="Genomic_DNA"/>
</dbReference>
<dbReference type="RefSeq" id="WP_000469894.1">
    <property type="nucleotide sequence ID" value="NC_009487.1"/>
</dbReference>
<dbReference type="SMR" id="A5IQN7"/>
<dbReference type="KEGG" id="saj:SaurJH9_0707"/>
<dbReference type="HOGENOM" id="CLU_060296_2_0_9"/>
<dbReference type="GO" id="GO:0005886">
    <property type="term" value="C:plasma membrane"/>
    <property type="evidence" value="ECO:0007669"/>
    <property type="project" value="UniProtKB-SubCell"/>
</dbReference>
<dbReference type="GO" id="GO:0050380">
    <property type="term" value="F:undecaprenyl-diphosphatase activity"/>
    <property type="evidence" value="ECO:0007669"/>
    <property type="project" value="UniProtKB-UniRule"/>
</dbReference>
<dbReference type="GO" id="GO:0071555">
    <property type="term" value="P:cell wall organization"/>
    <property type="evidence" value="ECO:0007669"/>
    <property type="project" value="UniProtKB-KW"/>
</dbReference>
<dbReference type="GO" id="GO:0009252">
    <property type="term" value="P:peptidoglycan biosynthetic process"/>
    <property type="evidence" value="ECO:0007669"/>
    <property type="project" value="UniProtKB-KW"/>
</dbReference>
<dbReference type="GO" id="GO:0008360">
    <property type="term" value="P:regulation of cell shape"/>
    <property type="evidence" value="ECO:0007669"/>
    <property type="project" value="UniProtKB-KW"/>
</dbReference>
<dbReference type="GO" id="GO:0046677">
    <property type="term" value="P:response to antibiotic"/>
    <property type="evidence" value="ECO:0007669"/>
    <property type="project" value="UniProtKB-UniRule"/>
</dbReference>
<dbReference type="HAMAP" id="MF_01006">
    <property type="entry name" value="Undec_diphosphatase"/>
    <property type="match status" value="1"/>
</dbReference>
<dbReference type="InterPro" id="IPR003824">
    <property type="entry name" value="UppP"/>
</dbReference>
<dbReference type="NCBIfam" id="NF001390">
    <property type="entry name" value="PRK00281.1-4"/>
    <property type="match status" value="1"/>
</dbReference>
<dbReference type="NCBIfam" id="TIGR00753">
    <property type="entry name" value="undec_PP_bacA"/>
    <property type="match status" value="1"/>
</dbReference>
<dbReference type="PANTHER" id="PTHR30622">
    <property type="entry name" value="UNDECAPRENYL-DIPHOSPHATASE"/>
    <property type="match status" value="1"/>
</dbReference>
<dbReference type="PANTHER" id="PTHR30622:SF3">
    <property type="entry name" value="UNDECAPRENYL-DIPHOSPHATASE"/>
    <property type="match status" value="1"/>
</dbReference>
<dbReference type="Pfam" id="PF02673">
    <property type="entry name" value="BacA"/>
    <property type="match status" value="1"/>
</dbReference>
<comment type="function">
    <text evidence="1">Catalyzes the dephosphorylation of undecaprenyl diphosphate (UPP). Confers resistance to bacitracin.</text>
</comment>
<comment type="catalytic activity">
    <reaction evidence="1">
        <text>di-trans,octa-cis-undecaprenyl diphosphate + H2O = di-trans,octa-cis-undecaprenyl phosphate + phosphate + H(+)</text>
        <dbReference type="Rhea" id="RHEA:28094"/>
        <dbReference type="ChEBI" id="CHEBI:15377"/>
        <dbReference type="ChEBI" id="CHEBI:15378"/>
        <dbReference type="ChEBI" id="CHEBI:43474"/>
        <dbReference type="ChEBI" id="CHEBI:58405"/>
        <dbReference type="ChEBI" id="CHEBI:60392"/>
        <dbReference type="EC" id="3.6.1.27"/>
    </reaction>
</comment>
<comment type="subcellular location">
    <subcellularLocation>
        <location evidence="1">Cell membrane</location>
        <topology evidence="1">Multi-pass membrane protein</topology>
    </subcellularLocation>
</comment>
<comment type="miscellaneous">
    <text>Bacitracin is thought to be involved in the inhibition of peptidoglycan synthesis by sequestering undecaprenyl diphosphate, thereby reducing the pool of lipid carrier available.</text>
</comment>
<comment type="similarity">
    <text evidence="1">Belongs to the UppP family.</text>
</comment>
<reference key="1">
    <citation type="submission" date="2007-05" db="EMBL/GenBank/DDBJ databases">
        <title>Complete sequence of chromosome of Staphylococcus aureus subsp. aureus JH9.</title>
        <authorList>
            <consortium name="US DOE Joint Genome Institute"/>
            <person name="Copeland A."/>
            <person name="Lucas S."/>
            <person name="Lapidus A."/>
            <person name="Barry K."/>
            <person name="Detter J.C."/>
            <person name="Glavina del Rio T."/>
            <person name="Hammon N."/>
            <person name="Israni S."/>
            <person name="Pitluck S."/>
            <person name="Chain P."/>
            <person name="Malfatti S."/>
            <person name="Shin M."/>
            <person name="Vergez L."/>
            <person name="Schmutz J."/>
            <person name="Larimer F."/>
            <person name="Land M."/>
            <person name="Hauser L."/>
            <person name="Kyrpides N."/>
            <person name="Kim E."/>
            <person name="Tomasz A."/>
            <person name="Richardson P."/>
        </authorList>
    </citation>
    <scope>NUCLEOTIDE SEQUENCE [LARGE SCALE GENOMIC DNA]</scope>
    <source>
        <strain>JH9</strain>
    </source>
</reference>
<feature type="chain" id="PRO_1000083993" description="Undecaprenyl-diphosphatase">
    <location>
        <begin position="1"/>
        <end position="291"/>
    </location>
</feature>
<feature type="transmembrane region" description="Helical" evidence="1">
    <location>
        <begin position="1"/>
        <end position="21"/>
    </location>
</feature>
<feature type="transmembrane region" description="Helical" evidence="1">
    <location>
        <begin position="48"/>
        <end position="68"/>
    </location>
</feature>
<feature type="transmembrane region" description="Helical" evidence="1">
    <location>
        <begin position="102"/>
        <end position="122"/>
    </location>
</feature>
<feature type="transmembrane region" description="Helical" evidence="1">
    <location>
        <begin position="126"/>
        <end position="146"/>
    </location>
</feature>
<feature type="transmembrane region" description="Helical" evidence="1">
    <location>
        <begin position="162"/>
        <end position="182"/>
    </location>
</feature>
<feature type="transmembrane region" description="Helical" evidence="1">
    <location>
        <begin position="203"/>
        <end position="223"/>
    </location>
</feature>
<feature type="transmembrane region" description="Helical" evidence="1">
    <location>
        <begin position="231"/>
        <end position="251"/>
    </location>
</feature>
<feature type="transmembrane region" description="Helical" evidence="1">
    <location>
        <begin position="267"/>
        <end position="287"/>
    </location>
</feature>
<accession>A5IQN7</accession>
<gene>
    <name evidence="1" type="primary">uppP</name>
    <name type="ordered locus">SaurJH9_0707</name>
</gene>
<name>UPPP_STAA9</name>
<protein>
    <recommendedName>
        <fullName evidence="1">Undecaprenyl-diphosphatase</fullName>
        <ecNumber evidence="1">3.6.1.27</ecNumber>
    </recommendedName>
    <alternativeName>
        <fullName evidence="1">Bacitracin resistance protein</fullName>
    </alternativeName>
    <alternativeName>
        <fullName evidence="1">Undecaprenyl pyrophosphate phosphatase</fullName>
    </alternativeName>
</protein>
<sequence length="291" mass="32339">MFIIELIKGIILGVVEGLTEFAPVSSTGHMILVDDMWLKSSEFLGSQSAFTFKIVIQLGSVFAAAWVFRERFLEILHIGKHKHVEGENDQQRRSKPRRLNLLHVLVGMVPAGILGLLFDDFIEEHLFSVPTVMIGLFVGAIYMIIADKYSVKVKNPQTVDQINYFQAFVIGISQAVAMWPGFSRSGSTISTGVLMKLNHKAASDFTFIMAVPIMLAASGLSLLKHYQDIQIADIPFYILGFLAAFTVGLIAIKTFLHLINKIKLIPFAIYRIVLVIFIAILYFGFGIGKGI</sequence>
<proteinExistence type="inferred from homology"/>
<evidence type="ECO:0000255" key="1">
    <source>
        <dbReference type="HAMAP-Rule" id="MF_01006"/>
    </source>
</evidence>